<evidence type="ECO:0000255" key="1">
    <source>
        <dbReference type="HAMAP-Rule" id="MF_00382"/>
    </source>
</evidence>
<evidence type="ECO:0000305" key="2"/>
<keyword id="KW-0687">Ribonucleoprotein</keyword>
<keyword id="KW-0689">Ribosomal protein</keyword>
<keyword id="KW-0694">RNA-binding</keyword>
<keyword id="KW-0699">rRNA-binding</keyword>
<accession>C3KTJ7</accession>
<proteinExistence type="inferred from homology"/>
<gene>
    <name evidence="1" type="primary">rplT</name>
    <name type="ordered locus">CLJ_B3401</name>
</gene>
<name>RL20_CLOB6</name>
<comment type="function">
    <text evidence="1">Binds directly to 23S ribosomal RNA and is necessary for the in vitro assembly process of the 50S ribosomal subunit. It is not involved in the protein synthesizing functions of that subunit.</text>
</comment>
<comment type="similarity">
    <text evidence="1">Belongs to the bacterial ribosomal protein bL20 family.</text>
</comment>
<sequence>MARVKRAMNARKRHKKVLKLAKGYYGGKSKLFKTANESVIRALRNAYVGRKLKKRDYRKLWIARINAATRMNGLSYSKFMNGIKNAGIDINRKMLSEIAINDPKAFAELVDVAKKQLNA</sequence>
<protein>
    <recommendedName>
        <fullName evidence="1">Large ribosomal subunit protein bL20</fullName>
    </recommendedName>
    <alternativeName>
        <fullName evidence="2">50S ribosomal protein L20</fullName>
    </alternativeName>
</protein>
<reference key="1">
    <citation type="submission" date="2008-05" db="EMBL/GenBank/DDBJ databases">
        <title>Genome sequence of Clostridium botulinum Ba4 strain 657.</title>
        <authorList>
            <person name="Shrivastava S."/>
            <person name="Brown J.L."/>
            <person name="Bruce D."/>
            <person name="Detter C."/>
            <person name="Munk C."/>
            <person name="Smith L.A."/>
            <person name="Smith T.J."/>
            <person name="Sutton G."/>
            <person name="Brettin T.S."/>
        </authorList>
    </citation>
    <scope>NUCLEOTIDE SEQUENCE [LARGE SCALE GENOMIC DNA]</scope>
    <source>
        <strain>657 / Type Ba4</strain>
    </source>
</reference>
<dbReference type="EMBL" id="CP001083">
    <property type="protein sequence ID" value="ACQ54729.1"/>
    <property type="molecule type" value="Genomic_DNA"/>
</dbReference>
<dbReference type="RefSeq" id="WP_003386545.1">
    <property type="nucleotide sequence ID" value="NC_012658.1"/>
</dbReference>
<dbReference type="SMR" id="C3KTJ7"/>
<dbReference type="GeneID" id="92939856"/>
<dbReference type="KEGG" id="cbi:CLJ_B3401"/>
<dbReference type="HOGENOM" id="CLU_123265_0_1_9"/>
<dbReference type="Proteomes" id="UP000002333">
    <property type="component" value="Chromosome"/>
</dbReference>
<dbReference type="GO" id="GO:1990904">
    <property type="term" value="C:ribonucleoprotein complex"/>
    <property type="evidence" value="ECO:0007669"/>
    <property type="project" value="UniProtKB-KW"/>
</dbReference>
<dbReference type="GO" id="GO:0005840">
    <property type="term" value="C:ribosome"/>
    <property type="evidence" value="ECO:0007669"/>
    <property type="project" value="UniProtKB-KW"/>
</dbReference>
<dbReference type="GO" id="GO:0019843">
    <property type="term" value="F:rRNA binding"/>
    <property type="evidence" value="ECO:0007669"/>
    <property type="project" value="UniProtKB-UniRule"/>
</dbReference>
<dbReference type="GO" id="GO:0003735">
    <property type="term" value="F:structural constituent of ribosome"/>
    <property type="evidence" value="ECO:0007669"/>
    <property type="project" value="InterPro"/>
</dbReference>
<dbReference type="GO" id="GO:0000027">
    <property type="term" value="P:ribosomal large subunit assembly"/>
    <property type="evidence" value="ECO:0007669"/>
    <property type="project" value="UniProtKB-UniRule"/>
</dbReference>
<dbReference type="GO" id="GO:0006412">
    <property type="term" value="P:translation"/>
    <property type="evidence" value="ECO:0007669"/>
    <property type="project" value="InterPro"/>
</dbReference>
<dbReference type="CDD" id="cd07026">
    <property type="entry name" value="Ribosomal_L20"/>
    <property type="match status" value="1"/>
</dbReference>
<dbReference type="FunFam" id="1.10.1900.20:FF:000001">
    <property type="entry name" value="50S ribosomal protein L20"/>
    <property type="match status" value="1"/>
</dbReference>
<dbReference type="Gene3D" id="6.10.160.10">
    <property type="match status" value="1"/>
</dbReference>
<dbReference type="Gene3D" id="1.10.1900.20">
    <property type="entry name" value="Ribosomal protein L20"/>
    <property type="match status" value="1"/>
</dbReference>
<dbReference type="HAMAP" id="MF_00382">
    <property type="entry name" value="Ribosomal_bL20"/>
    <property type="match status" value="1"/>
</dbReference>
<dbReference type="InterPro" id="IPR005813">
    <property type="entry name" value="Ribosomal_bL20"/>
</dbReference>
<dbReference type="InterPro" id="IPR049946">
    <property type="entry name" value="RIBOSOMAL_L20_CS"/>
</dbReference>
<dbReference type="InterPro" id="IPR035566">
    <property type="entry name" value="Ribosomal_protein_bL20_C"/>
</dbReference>
<dbReference type="NCBIfam" id="TIGR01032">
    <property type="entry name" value="rplT_bact"/>
    <property type="match status" value="1"/>
</dbReference>
<dbReference type="PANTHER" id="PTHR10986">
    <property type="entry name" value="39S RIBOSOMAL PROTEIN L20"/>
    <property type="match status" value="1"/>
</dbReference>
<dbReference type="Pfam" id="PF00453">
    <property type="entry name" value="Ribosomal_L20"/>
    <property type="match status" value="1"/>
</dbReference>
<dbReference type="PRINTS" id="PR00062">
    <property type="entry name" value="RIBOSOMALL20"/>
</dbReference>
<dbReference type="SUPFAM" id="SSF74731">
    <property type="entry name" value="Ribosomal protein L20"/>
    <property type="match status" value="1"/>
</dbReference>
<dbReference type="PROSITE" id="PS00937">
    <property type="entry name" value="RIBOSOMAL_L20"/>
    <property type="match status" value="1"/>
</dbReference>
<organism>
    <name type="scientific">Clostridium botulinum (strain 657 / Type Ba4)</name>
    <dbReference type="NCBI Taxonomy" id="515621"/>
    <lineage>
        <taxon>Bacteria</taxon>
        <taxon>Bacillati</taxon>
        <taxon>Bacillota</taxon>
        <taxon>Clostridia</taxon>
        <taxon>Eubacteriales</taxon>
        <taxon>Clostridiaceae</taxon>
        <taxon>Clostridium</taxon>
    </lineage>
</organism>
<feature type="chain" id="PRO_1000205704" description="Large ribosomal subunit protein bL20">
    <location>
        <begin position="1"/>
        <end position="119"/>
    </location>
</feature>